<protein>
    <recommendedName>
        <fullName evidence="1">tRNA-2-methylthio-N(6)-dimethylallyladenosine synthase</fullName>
        <ecNumber evidence="1">2.8.4.3</ecNumber>
    </recommendedName>
    <alternativeName>
        <fullName evidence="1">(Dimethylallyl)adenosine tRNA methylthiotransferase MiaB</fullName>
    </alternativeName>
    <alternativeName>
        <fullName evidence="1">tRNA-i(6)A37 methylthiotransferase</fullName>
    </alternativeName>
</protein>
<evidence type="ECO:0000255" key="1">
    <source>
        <dbReference type="HAMAP-Rule" id="MF_01864"/>
    </source>
</evidence>
<evidence type="ECO:0000255" key="2">
    <source>
        <dbReference type="PROSITE-ProRule" id="PRU01266"/>
    </source>
</evidence>
<accession>Q6G4V6</accession>
<comment type="function">
    <text evidence="1">Catalyzes the methylthiolation of N6-(dimethylallyl)adenosine (i(6)A), leading to the formation of 2-methylthio-N6-(dimethylallyl)adenosine (ms(2)i(6)A) at position 37 in tRNAs that read codons beginning with uridine.</text>
</comment>
<comment type="catalytic activity">
    <reaction evidence="1">
        <text>N(6)-dimethylallyladenosine(37) in tRNA + (sulfur carrier)-SH + AH2 + 2 S-adenosyl-L-methionine = 2-methylsulfanyl-N(6)-dimethylallyladenosine(37) in tRNA + (sulfur carrier)-H + 5'-deoxyadenosine + L-methionine + A + S-adenosyl-L-homocysteine + 2 H(+)</text>
        <dbReference type="Rhea" id="RHEA:37067"/>
        <dbReference type="Rhea" id="RHEA-COMP:10375"/>
        <dbReference type="Rhea" id="RHEA-COMP:10376"/>
        <dbReference type="Rhea" id="RHEA-COMP:14737"/>
        <dbReference type="Rhea" id="RHEA-COMP:14739"/>
        <dbReference type="ChEBI" id="CHEBI:13193"/>
        <dbReference type="ChEBI" id="CHEBI:15378"/>
        <dbReference type="ChEBI" id="CHEBI:17319"/>
        <dbReference type="ChEBI" id="CHEBI:17499"/>
        <dbReference type="ChEBI" id="CHEBI:29917"/>
        <dbReference type="ChEBI" id="CHEBI:57844"/>
        <dbReference type="ChEBI" id="CHEBI:57856"/>
        <dbReference type="ChEBI" id="CHEBI:59789"/>
        <dbReference type="ChEBI" id="CHEBI:64428"/>
        <dbReference type="ChEBI" id="CHEBI:74415"/>
        <dbReference type="ChEBI" id="CHEBI:74417"/>
        <dbReference type="EC" id="2.8.4.3"/>
    </reaction>
</comment>
<comment type="cofactor">
    <cofactor evidence="1">
        <name>[4Fe-4S] cluster</name>
        <dbReference type="ChEBI" id="CHEBI:49883"/>
    </cofactor>
    <text evidence="1">Binds 2 [4Fe-4S] clusters. One cluster is coordinated with 3 cysteines and an exchangeable S-adenosyl-L-methionine.</text>
</comment>
<comment type="subunit">
    <text evidence="1">Monomer.</text>
</comment>
<comment type="subcellular location">
    <subcellularLocation>
        <location evidence="1">Cytoplasm</location>
    </subcellularLocation>
</comment>
<comment type="similarity">
    <text evidence="1">Belongs to the methylthiotransferase family. MiaB subfamily.</text>
</comment>
<organism>
    <name type="scientific">Bartonella henselae (strain ATCC 49882 / DSM 28221 / CCUG 30454 / Houston 1)</name>
    <name type="common">Rochalimaea henselae</name>
    <dbReference type="NCBI Taxonomy" id="283166"/>
    <lineage>
        <taxon>Bacteria</taxon>
        <taxon>Pseudomonadati</taxon>
        <taxon>Pseudomonadota</taxon>
        <taxon>Alphaproteobacteria</taxon>
        <taxon>Hyphomicrobiales</taxon>
        <taxon>Bartonellaceae</taxon>
        <taxon>Bartonella</taxon>
    </lineage>
</organism>
<name>MIAB_BARHE</name>
<keyword id="KW-0004">4Fe-4S</keyword>
<keyword id="KW-0963">Cytoplasm</keyword>
<keyword id="KW-0408">Iron</keyword>
<keyword id="KW-0411">Iron-sulfur</keyword>
<keyword id="KW-0479">Metal-binding</keyword>
<keyword id="KW-0949">S-adenosyl-L-methionine</keyword>
<keyword id="KW-0808">Transferase</keyword>
<keyword id="KW-0819">tRNA processing</keyword>
<dbReference type="EC" id="2.8.4.3" evidence="1"/>
<dbReference type="EMBL" id="BX897699">
    <property type="protein sequence ID" value="CAF27038.1"/>
    <property type="molecule type" value="Genomic_DNA"/>
</dbReference>
<dbReference type="RefSeq" id="WP_011180177.1">
    <property type="nucleotide sequence ID" value="NC_005956.1"/>
</dbReference>
<dbReference type="SMR" id="Q6G4V6"/>
<dbReference type="PaxDb" id="283166-BH02260"/>
<dbReference type="EnsemblBacteria" id="CAF27038">
    <property type="protein sequence ID" value="CAF27038"/>
    <property type="gene ID" value="BH02260"/>
</dbReference>
<dbReference type="GeneID" id="92984893"/>
<dbReference type="KEGG" id="bhe:BH02260"/>
<dbReference type="eggNOG" id="COG0621">
    <property type="taxonomic scope" value="Bacteria"/>
</dbReference>
<dbReference type="OrthoDB" id="9805215at2"/>
<dbReference type="Proteomes" id="UP000000421">
    <property type="component" value="Chromosome"/>
</dbReference>
<dbReference type="GO" id="GO:0005829">
    <property type="term" value="C:cytosol"/>
    <property type="evidence" value="ECO:0007669"/>
    <property type="project" value="TreeGrafter"/>
</dbReference>
<dbReference type="GO" id="GO:0051539">
    <property type="term" value="F:4 iron, 4 sulfur cluster binding"/>
    <property type="evidence" value="ECO:0007669"/>
    <property type="project" value="UniProtKB-UniRule"/>
</dbReference>
<dbReference type="GO" id="GO:0046872">
    <property type="term" value="F:metal ion binding"/>
    <property type="evidence" value="ECO:0007669"/>
    <property type="project" value="UniProtKB-KW"/>
</dbReference>
<dbReference type="GO" id="GO:0035597">
    <property type="term" value="F:N6-isopentenyladenosine methylthiotransferase activity"/>
    <property type="evidence" value="ECO:0007669"/>
    <property type="project" value="TreeGrafter"/>
</dbReference>
<dbReference type="CDD" id="cd01335">
    <property type="entry name" value="Radical_SAM"/>
    <property type="match status" value="1"/>
</dbReference>
<dbReference type="FunFam" id="3.40.50.12160:FF:000003">
    <property type="entry name" value="CDK5 regulatory subunit-associated protein 1"/>
    <property type="match status" value="1"/>
</dbReference>
<dbReference type="FunFam" id="3.80.30.20:FF:000001">
    <property type="entry name" value="tRNA-2-methylthio-N(6)-dimethylallyladenosine synthase 2"/>
    <property type="match status" value="1"/>
</dbReference>
<dbReference type="Gene3D" id="3.40.50.12160">
    <property type="entry name" value="Methylthiotransferase, N-terminal domain"/>
    <property type="match status" value="1"/>
</dbReference>
<dbReference type="Gene3D" id="3.80.30.20">
    <property type="entry name" value="tm_1862 like domain"/>
    <property type="match status" value="1"/>
</dbReference>
<dbReference type="HAMAP" id="MF_01864">
    <property type="entry name" value="tRNA_metthiotr_MiaB"/>
    <property type="match status" value="1"/>
</dbReference>
<dbReference type="InterPro" id="IPR006638">
    <property type="entry name" value="Elp3/MiaA/NifB-like_rSAM"/>
</dbReference>
<dbReference type="InterPro" id="IPR005839">
    <property type="entry name" value="Methylthiotransferase"/>
</dbReference>
<dbReference type="InterPro" id="IPR020612">
    <property type="entry name" value="Methylthiotransferase_CS"/>
</dbReference>
<dbReference type="InterPro" id="IPR013848">
    <property type="entry name" value="Methylthiotransferase_N"/>
</dbReference>
<dbReference type="InterPro" id="IPR038135">
    <property type="entry name" value="Methylthiotransferase_N_sf"/>
</dbReference>
<dbReference type="InterPro" id="IPR006463">
    <property type="entry name" value="MiaB_methiolase"/>
</dbReference>
<dbReference type="InterPro" id="IPR007197">
    <property type="entry name" value="rSAM"/>
</dbReference>
<dbReference type="InterPro" id="IPR023404">
    <property type="entry name" value="rSAM_horseshoe"/>
</dbReference>
<dbReference type="InterPro" id="IPR002792">
    <property type="entry name" value="TRAM_dom"/>
</dbReference>
<dbReference type="NCBIfam" id="TIGR01574">
    <property type="entry name" value="miaB-methiolase"/>
    <property type="match status" value="1"/>
</dbReference>
<dbReference type="NCBIfam" id="TIGR00089">
    <property type="entry name" value="MiaB/RimO family radical SAM methylthiotransferase"/>
    <property type="match status" value="1"/>
</dbReference>
<dbReference type="PANTHER" id="PTHR43020">
    <property type="entry name" value="CDK5 REGULATORY SUBUNIT-ASSOCIATED PROTEIN 1"/>
    <property type="match status" value="1"/>
</dbReference>
<dbReference type="PANTHER" id="PTHR43020:SF2">
    <property type="entry name" value="MITOCHONDRIAL TRNA METHYLTHIOTRANSFERASE CDK5RAP1"/>
    <property type="match status" value="1"/>
</dbReference>
<dbReference type="Pfam" id="PF04055">
    <property type="entry name" value="Radical_SAM"/>
    <property type="match status" value="1"/>
</dbReference>
<dbReference type="Pfam" id="PF00919">
    <property type="entry name" value="UPF0004"/>
    <property type="match status" value="1"/>
</dbReference>
<dbReference type="SFLD" id="SFLDF00273">
    <property type="entry name" value="(dimethylallyl)adenosine_tRNA"/>
    <property type="match status" value="1"/>
</dbReference>
<dbReference type="SFLD" id="SFLDG01082">
    <property type="entry name" value="B12-binding_domain_containing"/>
    <property type="match status" value="1"/>
</dbReference>
<dbReference type="SFLD" id="SFLDG01061">
    <property type="entry name" value="methylthiotransferase"/>
    <property type="match status" value="1"/>
</dbReference>
<dbReference type="SMART" id="SM00729">
    <property type="entry name" value="Elp3"/>
    <property type="match status" value="1"/>
</dbReference>
<dbReference type="SUPFAM" id="SSF102114">
    <property type="entry name" value="Radical SAM enzymes"/>
    <property type="match status" value="1"/>
</dbReference>
<dbReference type="PROSITE" id="PS51449">
    <property type="entry name" value="MTTASE_N"/>
    <property type="match status" value="1"/>
</dbReference>
<dbReference type="PROSITE" id="PS01278">
    <property type="entry name" value="MTTASE_RADICAL"/>
    <property type="match status" value="1"/>
</dbReference>
<dbReference type="PROSITE" id="PS51918">
    <property type="entry name" value="RADICAL_SAM"/>
    <property type="match status" value="1"/>
</dbReference>
<dbReference type="PROSITE" id="PS50926">
    <property type="entry name" value="TRAM"/>
    <property type="match status" value="1"/>
</dbReference>
<gene>
    <name evidence="1" type="primary">miaB</name>
    <name type="ordered locus">BH02260</name>
</gene>
<proteinExistence type="inferred from homology"/>
<sequence length="458" mass="51438">MNKANPKNIPPLAPKKVFIKTYGCQMNVYDSQRMTDSLSSKGYVATQTPNDADLILVNTCHIREKAAEKLYSDLGRLRVMRQERTPDKPLMVGVTGCVAQAEGSEILRRAPIVDLVIGPQMYHRLPDLLEQTKQGKKIVATEYAVEDKFAHLPPHNKRAVRKRGVSAFLTVQEGCDKFCTFCVVPYTRGAEISRSVEQITEEARQLIEAGVKEITLLGQNVNGWHGQNVNGKTWRLGDLLYHLAKLDGLKRLRYTTSHPRDMDDSLIAAHRDLDILMPYLHLPVQSGSDRILKAMNRQHKSIHYLQLIEKIRNARPDIAFSGDFIVGFPGETDEDFEETIKLIKQVEYSSAYSFKYSPRPGTVGATMKNHVEEAVKDARLQHLQVLLLEQQNAFLRSKIGQTTDVLIEKAGRHSGQMVGRSPWLLPVVVDTQASTGTVIPIHIKNTSSNSFVGEMTNM</sequence>
<feature type="chain" id="PRO_0000374145" description="tRNA-2-methylthio-N(6)-dimethylallyladenosine synthase">
    <location>
        <begin position="1"/>
        <end position="458"/>
    </location>
</feature>
<feature type="domain" description="MTTase N-terminal" evidence="1">
    <location>
        <begin position="15"/>
        <end position="134"/>
    </location>
</feature>
<feature type="domain" description="Radical SAM core" evidence="2">
    <location>
        <begin position="161"/>
        <end position="393"/>
    </location>
</feature>
<feature type="domain" description="TRAM" evidence="1">
    <location>
        <begin position="396"/>
        <end position="457"/>
    </location>
</feature>
<feature type="binding site" evidence="1">
    <location>
        <position position="24"/>
    </location>
    <ligand>
        <name>[4Fe-4S] cluster</name>
        <dbReference type="ChEBI" id="CHEBI:49883"/>
        <label>1</label>
    </ligand>
</feature>
<feature type="binding site" evidence="1">
    <location>
        <position position="60"/>
    </location>
    <ligand>
        <name>[4Fe-4S] cluster</name>
        <dbReference type="ChEBI" id="CHEBI:49883"/>
        <label>1</label>
    </ligand>
</feature>
<feature type="binding site" evidence="1">
    <location>
        <position position="97"/>
    </location>
    <ligand>
        <name>[4Fe-4S] cluster</name>
        <dbReference type="ChEBI" id="CHEBI:49883"/>
        <label>1</label>
    </ligand>
</feature>
<feature type="binding site" evidence="1">
    <location>
        <position position="175"/>
    </location>
    <ligand>
        <name>[4Fe-4S] cluster</name>
        <dbReference type="ChEBI" id="CHEBI:49883"/>
        <label>2</label>
        <note>4Fe-4S-S-AdoMet</note>
    </ligand>
</feature>
<feature type="binding site" evidence="1">
    <location>
        <position position="179"/>
    </location>
    <ligand>
        <name>[4Fe-4S] cluster</name>
        <dbReference type="ChEBI" id="CHEBI:49883"/>
        <label>2</label>
        <note>4Fe-4S-S-AdoMet</note>
    </ligand>
</feature>
<feature type="binding site" evidence="1">
    <location>
        <position position="182"/>
    </location>
    <ligand>
        <name>[4Fe-4S] cluster</name>
        <dbReference type="ChEBI" id="CHEBI:49883"/>
        <label>2</label>
        <note>4Fe-4S-S-AdoMet</note>
    </ligand>
</feature>
<reference key="1">
    <citation type="journal article" date="2004" name="Proc. Natl. Acad. Sci. U.S.A.">
        <title>The louse-borne human pathogen Bartonella quintana is a genomic derivative of the zoonotic agent Bartonella henselae.</title>
        <authorList>
            <person name="Alsmark U.C.M."/>
            <person name="Frank A.C."/>
            <person name="Karlberg E.O."/>
            <person name="Legault B.-A."/>
            <person name="Ardell D.H."/>
            <person name="Canbaeck B."/>
            <person name="Eriksson A.-S."/>
            <person name="Naeslund A.K."/>
            <person name="Handley S.A."/>
            <person name="Huvet M."/>
            <person name="La Scola B."/>
            <person name="Holmberg M."/>
            <person name="Andersson S.G.E."/>
        </authorList>
    </citation>
    <scope>NUCLEOTIDE SEQUENCE [LARGE SCALE GENOMIC DNA]</scope>
    <source>
        <strain>ATCC 49882 / DSM 28221 / CCUG 30454 / Houston 1</strain>
    </source>
</reference>